<protein>
    <recommendedName>
        <fullName evidence="4">Aminotransferase TOXF</fullName>
        <ecNumber evidence="6">2.6.1.-</ecNumber>
    </recommendedName>
    <alternativeName>
        <fullName evidence="4">TOX2 HC-toxin biosynthesis cluster protein TOXF</fullName>
    </alternativeName>
</protein>
<comment type="function">
    <text evidence="2">Aminotransferase, part of the diffuse TOX2 gene cluster that mediates the biosynthesis of the HC-toxin, cyclic tetrapeptide of structure cyclo(D-Pro-L-Ala-D-Ala-L-Aeo), where Aeo stands for 2-amino-9,10-epoxi-8-oxodecanoic acid (PubMed:10627051). HC-toxin is a determinant of specificity and virulence in the interaction between the producing fungus and its host, maize (PubMed:10627051). TOXF contributes to the synthesis of 2-amino-9,10-epoxi-8-oxodecanoic acid, an essential precursor for the production of the major forms of HC-toxin by the non-ribosomal peptide synthetase HTS1 (PubMed:10627051).</text>
</comment>
<comment type="cofactor">
    <cofactor evidence="1">
        <name>pyridoxal 5'-phosphate</name>
        <dbReference type="ChEBI" id="CHEBI:597326"/>
    </cofactor>
</comment>
<comment type="pathway">
    <text evidence="4">Mycotoxin biosynthesis; HC-toxin biosynthesis.</text>
</comment>
<comment type="disruption phenotype">
    <text evidence="2">Does not affect growth and sporulation, but impairs the production of HC-toxin and related pathogenicity.</text>
</comment>
<comment type="miscellaneous">
    <text evidence="3">The genes involved in HC-toxin biosynthesis, called collectively TOX2, are organized into a diffuse cluster that spans &gt;500 kb. All of the known genes are duplicated or triplicated within this region, with some variation in copy number and chromosomal location among different race 1 strains.</text>
</comment>
<comment type="similarity">
    <text evidence="5">Belongs to the class-IV pyridoxal-phosphate-dependent aminotransferase family.</text>
</comment>
<sequence>MAIPLPAFYKWDVYDSKLNNVHGHVECRYTAQTGYWSDPCFVQSPFLSVHGLAPGLNYGQQVYEGIQARRTARNEILIFRPGASADRMAKSATAVSMPPVPYELFVRSVHMAVALNADYVPPHDFHGSMYIRPCQFGSSCQIGLQPPDEFIFCVFVQPHIALHGHGSLRALIAEDFDRAATRGTGHVKIGGNYAPVIRWTQSAKKEENGGWDVLLHVDSKTQTRIDEFSTSAFIGTKYAEEQNEPPQIILPESAAAIQSITSDSVAWLAKSFGWNIVKQPVTIDELASLSEVMAVGTAAGLVPVSCIRHNSTNRTFEFPSAGPMYRQLKETLDNIQRGRSSDSFGWCEKLRYAEFVQ</sequence>
<feature type="chain" id="PRO_0000103303" description="Aminotransferase TOXF">
    <location>
        <begin position="1"/>
        <end position="357"/>
    </location>
</feature>
<feature type="binding site" evidence="1">
    <location>
        <position position="87"/>
    </location>
    <ligand>
        <name>pyridoxal 5'-phosphate</name>
        <dbReference type="ChEBI" id="CHEBI:597326"/>
    </ligand>
</feature>
<feature type="binding site" evidence="1">
    <location>
        <position position="227"/>
    </location>
    <ligand>
        <name>pyridoxal 5'-phosphate</name>
        <dbReference type="ChEBI" id="CHEBI:597326"/>
    </ligand>
</feature>
<feature type="modified residue" description="N6-(pyridoxal phosphate)lysine" evidence="1">
    <location>
        <position position="188"/>
    </location>
</feature>
<dbReference type="EC" id="2.6.1.-" evidence="6"/>
<dbReference type="EMBL" id="AF157629">
    <property type="protein sequence ID" value="AAD45321.1"/>
    <property type="molecule type" value="Genomic_DNA"/>
</dbReference>
<dbReference type="SMR" id="Q9Y885"/>
<dbReference type="UniPathway" id="UPA00874"/>
<dbReference type="PHI-base" id="PHI:157"/>
<dbReference type="GO" id="GO:0004084">
    <property type="term" value="F:branched-chain-amino-acid transaminase activity"/>
    <property type="evidence" value="ECO:0007669"/>
    <property type="project" value="UniProtKB-EC"/>
</dbReference>
<dbReference type="GO" id="GO:0009081">
    <property type="term" value="P:branched-chain amino acid metabolic process"/>
    <property type="evidence" value="ECO:0007669"/>
    <property type="project" value="InterPro"/>
</dbReference>
<dbReference type="GO" id="GO:0009403">
    <property type="term" value="P:toxin biosynthetic process"/>
    <property type="evidence" value="ECO:0000314"/>
    <property type="project" value="UniProtKB"/>
</dbReference>
<dbReference type="CDD" id="cd01557">
    <property type="entry name" value="BCAT_beta_family"/>
    <property type="match status" value="1"/>
</dbReference>
<dbReference type="Gene3D" id="3.30.470.10">
    <property type="match status" value="1"/>
</dbReference>
<dbReference type="Gene3D" id="3.20.10.10">
    <property type="entry name" value="D-amino Acid Aminotransferase, subunit A, domain 2"/>
    <property type="match status" value="1"/>
</dbReference>
<dbReference type="InterPro" id="IPR001544">
    <property type="entry name" value="Aminotrans_IV"/>
</dbReference>
<dbReference type="InterPro" id="IPR036038">
    <property type="entry name" value="Aminotransferase-like"/>
</dbReference>
<dbReference type="InterPro" id="IPR005786">
    <property type="entry name" value="B_amino_transII"/>
</dbReference>
<dbReference type="InterPro" id="IPR043132">
    <property type="entry name" value="BCAT-like_C"/>
</dbReference>
<dbReference type="InterPro" id="IPR043131">
    <property type="entry name" value="BCAT-like_N"/>
</dbReference>
<dbReference type="InterPro" id="IPR033939">
    <property type="entry name" value="BCAT_family"/>
</dbReference>
<dbReference type="PANTHER" id="PTHR42825">
    <property type="entry name" value="AMINO ACID AMINOTRANSFERASE"/>
    <property type="match status" value="1"/>
</dbReference>
<dbReference type="PANTHER" id="PTHR42825:SF2">
    <property type="entry name" value="BRANCHED-CHAIN-AMINO-ACID AMINOTRANSFERASE 3, CHLOROPLASTIC-RELATED"/>
    <property type="match status" value="1"/>
</dbReference>
<dbReference type="Pfam" id="PF01063">
    <property type="entry name" value="Aminotran_4"/>
    <property type="match status" value="1"/>
</dbReference>
<dbReference type="PIRSF" id="PIRSF006468">
    <property type="entry name" value="BCAT1"/>
    <property type="match status" value="1"/>
</dbReference>
<dbReference type="SUPFAM" id="SSF56752">
    <property type="entry name" value="D-aminoacid aminotransferase-like PLP-dependent enzymes"/>
    <property type="match status" value="1"/>
</dbReference>
<organism>
    <name type="scientific">Cochliobolus carbonum</name>
    <name type="common">Maize leaf spot fungus</name>
    <name type="synonym">Bipolaris zeicola</name>
    <dbReference type="NCBI Taxonomy" id="5017"/>
    <lineage>
        <taxon>Eukaryota</taxon>
        <taxon>Fungi</taxon>
        <taxon>Dikarya</taxon>
        <taxon>Ascomycota</taxon>
        <taxon>Pezizomycotina</taxon>
        <taxon>Dothideomycetes</taxon>
        <taxon>Pleosporomycetidae</taxon>
        <taxon>Pleosporales</taxon>
        <taxon>Pleosporineae</taxon>
        <taxon>Pleosporaceae</taxon>
        <taxon>Bipolaris</taxon>
    </lineage>
</organism>
<gene>
    <name type="primary">TOXF</name>
</gene>
<name>TOXF_COCCA</name>
<proteinExistence type="inferred from homology"/>
<accession>Q9Y885</accession>
<evidence type="ECO:0000250" key="1">
    <source>
        <dbReference type="UniProtKB" id="P19938"/>
    </source>
</evidence>
<evidence type="ECO:0000269" key="2">
    <source>
    </source>
</evidence>
<evidence type="ECO:0000269" key="3">
    <source>
    </source>
</evidence>
<evidence type="ECO:0000303" key="4">
    <source>
    </source>
</evidence>
<evidence type="ECO:0000305" key="5"/>
<evidence type="ECO:0000305" key="6">
    <source>
    </source>
</evidence>
<keyword id="KW-0032">Aminotransferase</keyword>
<keyword id="KW-0663">Pyridoxal phosphate</keyword>
<keyword id="KW-0808">Transferase</keyword>
<reference key="1">
    <citation type="journal article" date="1999" name="Microbiology">
        <title>A putative branched-chain-amino-acid transaminase gene required for HC-toxin biosynthesis and pathogenicity in Cochliobolus carbonum.</title>
        <authorList>
            <person name="Cheng Y.-Q."/>
            <person name="Ahn J.-H."/>
            <person name="Walton J.D."/>
        </authorList>
    </citation>
    <scope>NUCLEOTIDE SEQUENCE [GENOMIC DNA]</scope>
    <scope>FUNCTION</scope>
    <scope>DISRUPTION PHENOTYPE</scope>
    <scope>PATHWAY</scope>
    <source>
        <strain>ATCC 90305 / SB111 / 2R15</strain>
    </source>
</reference>
<reference key="2">
    <citation type="journal article" date="2002" name="Fungal Genet. Biol.">
        <title>An extended physical map of the TOX2 locus of Cochliobolus carbonum required for biosynthesis of HC-toxin.</title>
        <authorList>
            <person name="Ahn J.H."/>
            <person name="Cheng Y.Q."/>
            <person name="Walton J.D."/>
        </authorList>
    </citation>
    <scope>CLUSTER ORGANIZATION</scope>
</reference>